<accession>A8YTF6</accession>
<proteinExistence type="inferred from homology"/>
<sequence length="111" mass="12214">MSRRPNFGGMGMGGMNMQQMMKQAKKLQAQMAQEQENITAQEFTGKSADDLVVATFTGDRKLKDIKIDKEAIDPDDPDMLQDLVIDAVNKGLSQIDEATQASLGKYTKGLM</sequence>
<name>Y401_LACH4</name>
<comment type="function">
    <text evidence="1">Binds to DNA and alters its conformation. May be involved in regulation of gene expression, nucleoid organization and DNA protection.</text>
</comment>
<comment type="subunit">
    <text evidence="1">Homodimer.</text>
</comment>
<comment type="subcellular location">
    <subcellularLocation>
        <location evidence="1">Cytoplasm</location>
        <location evidence="1">Nucleoid</location>
    </subcellularLocation>
</comment>
<comment type="similarity">
    <text evidence="1">Belongs to the YbaB/EbfC family.</text>
</comment>
<keyword id="KW-0963">Cytoplasm</keyword>
<keyword id="KW-0238">DNA-binding</keyword>
<dbReference type="EMBL" id="CP000517">
    <property type="protein sequence ID" value="ABX26612.1"/>
    <property type="molecule type" value="Genomic_DNA"/>
</dbReference>
<dbReference type="RefSeq" id="WP_003625916.1">
    <property type="nucleotide sequence ID" value="NC_010080.1"/>
</dbReference>
<dbReference type="SMR" id="A8YTF6"/>
<dbReference type="KEGG" id="lhe:lhv_0401"/>
<dbReference type="eggNOG" id="COG0718">
    <property type="taxonomic scope" value="Bacteria"/>
</dbReference>
<dbReference type="HOGENOM" id="CLU_140930_1_1_9"/>
<dbReference type="Proteomes" id="UP000000790">
    <property type="component" value="Chromosome"/>
</dbReference>
<dbReference type="GO" id="GO:0043590">
    <property type="term" value="C:bacterial nucleoid"/>
    <property type="evidence" value="ECO:0007669"/>
    <property type="project" value="UniProtKB-UniRule"/>
</dbReference>
<dbReference type="GO" id="GO:0005829">
    <property type="term" value="C:cytosol"/>
    <property type="evidence" value="ECO:0007669"/>
    <property type="project" value="TreeGrafter"/>
</dbReference>
<dbReference type="GO" id="GO:0003677">
    <property type="term" value="F:DNA binding"/>
    <property type="evidence" value="ECO:0007669"/>
    <property type="project" value="UniProtKB-UniRule"/>
</dbReference>
<dbReference type="Gene3D" id="3.30.1310.10">
    <property type="entry name" value="Nucleoid-associated protein YbaB-like domain"/>
    <property type="match status" value="1"/>
</dbReference>
<dbReference type="HAMAP" id="MF_00274">
    <property type="entry name" value="DNA_YbaB_EbfC"/>
    <property type="match status" value="1"/>
</dbReference>
<dbReference type="InterPro" id="IPR036894">
    <property type="entry name" value="YbaB-like_sf"/>
</dbReference>
<dbReference type="InterPro" id="IPR004401">
    <property type="entry name" value="YbaB/EbfC"/>
</dbReference>
<dbReference type="NCBIfam" id="TIGR00103">
    <property type="entry name" value="DNA_YbaB_EbfC"/>
    <property type="match status" value="1"/>
</dbReference>
<dbReference type="PANTHER" id="PTHR33449">
    <property type="entry name" value="NUCLEOID-ASSOCIATED PROTEIN YBAB"/>
    <property type="match status" value="1"/>
</dbReference>
<dbReference type="PANTHER" id="PTHR33449:SF1">
    <property type="entry name" value="NUCLEOID-ASSOCIATED PROTEIN YBAB"/>
    <property type="match status" value="1"/>
</dbReference>
<dbReference type="Pfam" id="PF02575">
    <property type="entry name" value="YbaB_DNA_bd"/>
    <property type="match status" value="1"/>
</dbReference>
<dbReference type="PIRSF" id="PIRSF004555">
    <property type="entry name" value="UCP004555"/>
    <property type="match status" value="1"/>
</dbReference>
<dbReference type="SUPFAM" id="SSF82607">
    <property type="entry name" value="YbaB-like"/>
    <property type="match status" value="1"/>
</dbReference>
<feature type="chain" id="PRO_1000197662" description="Nucleoid-associated protein lhv_0401">
    <location>
        <begin position="1"/>
        <end position="111"/>
    </location>
</feature>
<organism>
    <name type="scientific">Lactobacillus helveticus (strain DPC 4571)</name>
    <dbReference type="NCBI Taxonomy" id="405566"/>
    <lineage>
        <taxon>Bacteria</taxon>
        <taxon>Bacillati</taxon>
        <taxon>Bacillota</taxon>
        <taxon>Bacilli</taxon>
        <taxon>Lactobacillales</taxon>
        <taxon>Lactobacillaceae</taxon>
        <taxon>Lactobacillus</taxon>
    </lineage>
</organism>
<reference key="1">
    <citation type="journal article" date="2008" name="J. Bacteriol.">
        <title>Genome sequence of Lactobacillus helveticus: an organism distinguished by selective gene loss and IS element expansion.</title>
        <authorList>
            <person name="Callanan M."/>
            <person name="Kaleta P."/>
            <person name="O'Callaghan J."/>
            <person name="O'Sullivan O."/>
            <person name="Jordan K."/>
            <person name="McAuliffe O."/>
            <person name="Sangrador-Vegas A."/>
            <person name="Slattery L."/>
            <person name="Fitzgerald G.F."/>
            <person name="Beresford T."/>
            <person name="Ross R.P."/>
        </authorList>
    </citation>
    <scope>NUCLEOTIDE SEQUENCE [LARGE SCALE GENOMIC DNA]</scope>
    <source>
        <strain>DPC 4571</strain>
    </source>
</reference>
<evidence type="ECO:0000255" key="1">
    <source>
        <dbReference type="HAMAP-Rule" id="MF_00274"/>
    </source>
</evidence>
<gene>
    <name type="ordered locus">lhv_0401</name>
</gene>
<protein>
    <recommendedName>
        <fullName evidence="1">Nucleoid-associated protein lhv_0401</fullName>
    </recommendedName>
</protein>